<proteinExistence type="inferred from homology"/>
<evidence type="ECO:0000255" key="1">
    <source>
        <dbReference type="HAMAP-Rule" id="MF_00293"/>
    </source>
</evidence>
<dbReference type="EMBL" id="AP008231">
    <property type="protein sequence ID" value="BAD79479.1"/>
    <property type="molecule type" value="Genomic_DNA"/>
</dbReference>
<dbReference type="RefSeq" id="WP_011243601.1">
    <property type="nucleotide sequence ID" value="NZ_CP085785.1"/>
</dbReference>
<dbReference type="SMR" id="Q5N2J1"/>
<dbReference type="GeneID" id="72429038"/>
<dbReference type="KEGG" id="syc:syc1289_d"/>
<dbReference type="eggNOG" id="ENOG50339MH">
    <property type="taxonomic scope" value="Bacteria"/>
</dbReference>
<dbReference type="Proteomes" id="UP000001175">
    <property type="component" value="Chromosome"/>
</dbReference>
<dbReference type="GO" id="GO:0031676">
    <property type="term" value="C:plasma membrane-derived thylakoid membrane"/>
    <property type="evidence" value="ECO:0007669"/>
    <property type="project" value="UniProtKB-SubCell"/>
</dbReference>
<dbReference type="GO" id="GO:0015979">
    <property type="term" value="P:photosynthesis"/>
    <property type="evidence" value="ECO:0007669"/>
    <property type="project" value="InterPro"/>
</dbReference>
<dbReference type="HAMAP" id="MF_00293">
    <property type="entry name" value="PSII_PsbN"/>
    <property type="match status" value="1"/>
</dbReference>
<dbReference type="InterPro" id="IPR003398">
    <property type="entry name" value="PSII_PsbN"/>
</dbReference>
<dbReference type="NCBIfam" id="NF009650">
    <property type="entry name" value="PRK13183.1"/>
    <property type="match status" value="1"/>
</dbReference>
<dbReference type="PANTHER" id="PTHR35326">
    <property type="entry name" value="PROTEIN PSBN"/>
    <property type="match status" value="1"/>
</dbReference>
<dbReference type="PANTHER" id="PTHR35326:SF3">
    <property type="entry name" value="PROTEIN PSBN"/>
    <property type="match status" value="1"/>
</dbReference>
<dbReference type="Pfam" id="PF02468">
    <property type="entry name" value="PsbN"/>
    <property type="match status" value="1"/>
</dbReference>
<gene>
    <name evidence="1" type="primary">psbN</name>
    <name type="ordered locus">syc1289_d</name>
</gene>
<organism>
    <name type="scientific">Synechococcus sp. (strain ATCC 27144 / PCC 6301 / SAUG 1402/1)</name>
    <name type="common">Anacystis nidulans</name>
    <dbReference type="NCBI Taxonomy" id="269084"/>
    <lineage>
        <taxon>Bacteria</taxon>
        <taxon>Bacillati</taxon>
        <taxon>Cyanobacteriota</taxon>
        <taxon>Cyanophyceae</taxon>
        <taxon>Synechococcales</taxon>
        <taxon>Synechococcaceae</taxon>
        <taxon>Synechococcus</taxon>
    </lineage>
</organism>
<feature type="chain" id="PRO_0000232792" description="Protein PsbN">
    <location>
        <begin position="1"/>
        <end position="46"/>
    </location>
</feature>
<feature type="transmembrane region" description="Helical" evidence="1">
    <location>
        <begin position="7"/>
        <end position="27"/>
    </location>
</feature>
<sequence>MMEASPGLSIAITFAVILLALTGFSIYTSFGPPSKQLEDPFEDHED</sequence>
<accession>Q5N2J1</accession>
<keyword id="KW-0472">Membrane</keyword>
<keyword id="KW-0793">Thylakoid</keyword>
<keyword id="KW-0812">Transmembrane</keyword>
<keyword id="KW-1133">Transmembrane helix</keyword>
<reference key="1">
    <citation type="journal article" date="2007" name="Photosyn. Res.">
        <title>Complete nucleotide sequence of the freshwater unicellular cyanobacterium Synechococcus elongatus PCC 6301 chromosome: gene content and organization.</title>
        <authorList>
            <person name="Sugita C."/>
            <person name="Ogata K."/>
            <person name="Shikata M."/>
            <person name="Jikuya H."/>
            <person name="Takano J."/>
            <person name="Furumichi M."/>
            <person name="Kanehisa M."/>
            <person name="Omata T."/>
            <person name="Sugiura M."/>
            <person name="Sugita M."/>
        </authorList>
    </citation>
    <scope>NUCLEOTIDE SEQUENCE [LARGE SCALE GENOMIC DNA]</scope>
    <source>
        <strain>ATCC 27144 / PCC 6301 / SAUG 1402/1</strain>
    </source>
</reference>
<protein>
    <recommendedName>
        <fullName evidence="1">Protein PsbN</fullName>
    </recommendedName>
</protein>
<comment type="function">
    <text evidence="1">May play a role in photosystem I and II biogenesis.</text>
</comment>
<comment type="subcellular location">
    <subcellularLocation>
        <location evidence="1">Cellular thylakoid membrane</location>
        <topology evidence="1">Single-pass membrane protein</topology>
    </subcellularLocation>
</comment>
<comment type="similarity">
    <text evidence="1">Belongs to the PsbN family.</text>
</comment>
<comment type="caution">
    <text evidence="1">Originally thought to be a component of PSII; based on experiments in Synechocystis, N.tabacum and barley, and its absence from PSII in T.elongatus and T.vulcanus, this is probably not true.</text>
</comment>
<name>PSBN_SYNP6</name>